<sequence>MTALFEPTEHPHRRYNPLIDQWVLVSPHRAKRPWQGQQEKVNEEQKPSYDPTCYLCPSNKRITGELNPDYRKPYVFKNDFSALLEDTPAPEKSSDPLFQSSQARGESRVICFSPDHSKTLPLLTALEIEEVIKVWQEQLRELGAKYQWVQIFENKGAAMGCSNPHPHGQIWANSFLPNEVAREDRTQRDYLLKHGSVMLVDYVKRELALKERIVVETEHWIALVPYWAIWPFETLLLPKTHVKRLTELSDEQSKDLAVILKKLTTKYDNLFETSFPYSMGFHAAPFNGEDNEHWQLHAHFYPPLLRSATVRKFMVGYEMLGENQRDLTAEQAAERLRALSEVHYKERTK</sequence>
<comment type="catalytic activity">
    <reaction evidence="1">
        <text>alpha-D-galactose 1-phosphate + UDP-alpha-D-glucose = alpha-D-glucose 1-phosphate + UDP-alpha-D-galactose</text>
        <dbReference type="Rhea" id="RHEA:13989"/>
        <dbReference type="ChEBI" id="CHEBI:58336"/>
        <dbReference type="ChEBI" id="CHEBI:58601"/>
        <dbReference type="ChEBI" id="CHEBI:58885"/>
        <dbReference type="ChEBI" id="CHEBI:66914"/>
        <dbReference type="EC" id="2.7.7.12"/>
    </reaction>
</comment>
<comment type="cofactor">
    <cofactor evidence="1">
        <name>Zn(2+)</name>
        <dbReference type="ChEBI" id="CHEBI:29105"/>
    </cofactor>
    <text evidence="1">Binds 1 zinc ion per subunit. Zinc binding seems to play a structural role.</text>
</comment>
<comment type="pathway">
    <text>Carbohydrate metabolism; galactose metabolism.</text>
</comment>
<comment type="similarity">
    <text evidence="3">Belongs to the galactose-1-phosphate uridylyltransferase type 1 family.</text>
</comment>
<keyword id="KW-0119">Carbohydrate metabolism</keyword>
<keyword id="KW-0299">Galactose metabolism</keyword>
<keyword id="KW-0408">Iron</keyword>
<keyword id="KW-0479">Metal-binding</keyword>
<keyword id="KW-0548">Nucleotidyltransferase</keyword>
<keyword id="KW-1185">Reference proteome</keyword>
<keyword id="KW-0808">Transferase</keyword>
<keyword id="KW-0862">Zinc</keyword>
<gene>
    <name type="primary">galT</name>
    <name type="ordered locus">HI_0820</name>
</gene>
<evidence type="ECO:0000250" key="1">
    <source>
        <dbReference type="UniProtKB" id="P09148"/>
    </source>
</evidence>
<evidence type="ECO:0000255" key="2">
    <source>
        <dbReference type="PROSITE-ProRule" id="PRU10033"/>
    </source>
</evidence>
<evidence type="ECO:0000305" key="3"/>
<accession>P31764</accession>
<dbReference type="EC" id="2.7.7.12" evidence="1"/>
<dbReference type="EMBL" id="X65934">
    <property type="protein sequence ID" value="CAA46730.1"/>
    <property type="molecule type" value="Genomic_DNA"/>
</dbReference>
<dbReference type="EMBL" id="L42023">
    <property type="protein sequence ID" value="AAC22479.1"/>
    <property type="molecule type" value="Genomic_DNA"/>
</dbReference>
<dbReference type="PIR" id="E64096">
    <property type="entry name" value="E64096"/>
</dbReference>
<dbReference type="RefSeq" id="NP_438980.1">
    <property type="nucleotide sequence ID" value="NC_000907.1"/>
</dbReference>
<dbReference type="SMR" id="P31764"/>
<dbReference type="STRING" id="71421.HI_0820"/>
<dbReference type="EnsemblBacteria" id="AAC22479">
    <property type="protein sequence ID" value="AAC22479"/>
    <property type="gene ID" value="HI_0820"/>
</dbReference>
<dbReference type="KEGG" id="hin:HI_0820"/>
<dbReference type="PATRIC" id="fig|71421.8.peg.861"/>
<dbReference type="eggNOG" id="COG1085">
    <property type="taxonomic scope" value="Bacteria"/>
</dbReference>
<dbReference type="HOGENOM" id="CLU_029960_0_0_6"/>
<dbReference type="OrthoDB" id="9769064at2"/>
<dbReference type="PhylomeDB" id="P31764"/>
<dbReference type="BioCyc" id="HINF71421:G1GJ1-861-MONOMER"/>
<dbReference type="UniPathway" id="UPA00214"/>
<dbReference type="Proteomes" id="UP000000579">
    <property type="component" value="Chromosome"/>
</dbReference>
<dbReference type="GO" id="GO:0005737">
    <property type="term" value="C:cytoplasm"/>
    <property type="evidence" value="ECO:0000318"/>
    <property type="project" value="GO_Central"/>
</dbReference>
<dbReference type="GO" id="GO:0008108">
    <property type="term" value="F:UDP-glucose:hexose-1-phosphate uridylyltransferase activity"/>
    <property type="evidence" value="ECO:0000318"/>
    <property type="project" value="GO_Central"/>
</dbReference>
<dbReference type="GO" id="GO:0008270">
    <property type="term" value="F:zinc ion binding"/>
    <property type="evidence" value="ECO:0007669"/>
    <property type="project" value="InterPro"/>
</dbReference>
<dbReference type="GO" id="GO:0033499">
    <property type="term" value="P:galactose catabolic process via UDP-galactose, Leloir pathway"/>
    <property type="evidence" value="ECO:0000318"/>
    <property type="project" value="GO_Central"/>
</dbReference>
<dbReference type="CDD" id="cd00608">
    <property type="entry name" value="GalT"/>
    <property type="match status" value="1"/>
</dbReference>
<dbReference type="FunFam" id="3.30.428.10:FF:000001">
    <property type="entry name" value="Galactose-1-phosphate uridylyltransferase"/>
    <property type="match status" value="1"/>
</dbReference>
<dbReference type="FunFam" id="3.30.428.10:FF:000002">
    <property type="entry name" value="Galactose-1-phosphate uridylyltransferase"/>
    <property type="match status" value="1"/>
</dbReference>
<dbReference type="Gene3D" id="3.30.428.10">
    <property type="entry name" value="HIT-like"/>
    <property type="match status" value="2"/>
</dbReference>
<dbReference type="InterPro" id="IPR001937">
    <property type="entry name" value="GalP_UDPtransf1"/>
</dbReference>
<dbReference type="InterPro" id="IPR019779">
    <property type="entry name" value="GalP_UDPtransf1_His-AS"/>
</dbReference>
<dbReference type="InterPro" id="IPR005850">
    <property type="entry name" value="GalP_Utransf_C"/>
</dbReference>
<dbReference type="InterPro" id="IPR005849">
    <property type="entry name" value="GalP_Utransf_N"/>
</dbReference>
<dbReference type="InterPro" id="IPR036265">
    <property type="entry name" value="HIT-like_sf"/>
</dbReference>
<dbReference type="NCBIfam" id="TIGR00209">
    <property type="entry name" value="galT_1"/>
    <property type="match status" value="1"/>
</dbReference>
<dbReference type="NCBIfam" id="NF008724">
    <property type="entry name" value="PRK11720.1"/>
    <property type="match status" value="1"/>
</dbReference>
<dbReference type="PANTHER" id="PTHR11943">
    <property type="entry name" value="GALACTOSE-1-PHOSPHATE URIDYLYLTRANSFERASE"/>
    <property type="match status" value="1"/>
</dbReference>
<dbReference type="PANTHER" id="PTHR11943:SF1">
    <property type="entry name" value="GALACTOSE-1-PHOSPHATE URIDYLYLTRANSFERASE"/>
    <property type="match status" value="1"/>
</dbReference>
<dbReference type="Pfam" id="PF02744">
    <property type="entry name" value="GalP_UDP_tr_C"/>
    <property type="match status" value="1"/>
</dbReference>
<dbReference type="Pfam" id="PF01087">
    <property type="entry name" value="GalP_UDP_transf"/>
    <property type="match status" value="1"/>
</dbReference>
<dbReference type="PIRSF" id="PIRSF000808">
    <property type="entry name" value="GalT"/>
    <property type="match status" value="1"/>
</dbReference>
<dbReference type="SUPFAM" id="SSF54197">
    <property type="entry name" value="HIT-like"/>
    <property type="match status" value="2"/>
</dbReference>
<dbReference type="PROSITE" id="PS00117">
    <property type="entry name" value="GAL_P_UDP_TRANSF_I"/>
    <property type="match status" value="1"/>
</dbReference>
<proteinExistence type="inferred from homology"/>
<organism>
    <name type="scientific">Haemophilus influenzae (strain ATCC 51907 / DSM 11121 / KW20 / Rd)</name>
    <dbReference type="NCBI Taxonomy" id="71421"/>
    <lineage>
        <taxon>Bacteria</taxon>
        <taxon>Pseudomonadati</taxon>
        <taxon>Pseudomonadota</taxon>
        <taxon>Gammaproteobacteria</taxon>
        <taxon>Pasteurellales</taxon>
        <taxon>Pasteurellaceae</taxon>
        <taxon>Haemophilus</taxon>
    </lineage>
</organism>
<feature type="chain" id="PRO_0000169895" description="Galactose-1-phosphate uridylyltransferase">
    <location>
        <begin position="1"/>
        <end position="349"/>
    </location>
</feature>
<feature type="active site" description="Tele-UMP-histidine intermediate" evidence="2">
    <location>
        <position position="167"/>
    </location>
</feature>
<feature type="binding site" evidence="1">
    <location>
        <begin position="29"/>
        <end position="32"/>
    </location>
    <ligand>
        <name>UDP-alpha-D-glucose</name>
        <dbReference type="ChEBI" id="CHEBI:58885"/>
        <note>ligand shared between dimeric partners</note>
    </ligand>
</feature>
<feature type="binding site" evidence="2">
    <location>
        <position position="53"/>
    </location>
    <ligand>
        <name>Zn(2+)</name>
        <dbReference type="ChEBI" id="CHEBI:29105"/>
    </ligand>
</feature>
<feature type="binding site" evidence="2">
    <location>
        <position position="56"/>
    </location>
    <ligand>
        <name>Zn(2+)</name>
        <dbReference type="ChEBI" id="CHEBI:29105"/>
    </ligand>
</feature>
<feature type="binding site" description="in other chain" evidence="1">
    <location>
        <begin position="78"/>
        <end position="79"/>
    </location>
    <ligand>
        <name>UDP-alpha-D-glucose</name>
        <dbReference type="ChEBI" id="CHEBI:58885"/>
        <note>ligand shared between dimeric partners</note>
    </ligand>
</feature>
<feature type="binding site" evidence="2">
    <location>
        <position position="116"/>
    </location>
    <ligand>
        <name>Zn(2+)</name>
        <dbReference type="ChEBI" id="CHEBI:29105"/>
    </ligand>
</feature>
<feature type="binding site" description="in other chain" evidence="1">
    <location>
        <position position="154"/>
    </location>
    <ligand>
        <name>UDP-alpha-D-glucose</name>
        <dbReference type="ChEBI" id="CHEBI:58885"/>
        <note>ligand shared between dimeric partners</note>
    </ligand>
</feature>
<feature type="binding site" description="in other chain" evidence="1">
    <location>
        <begin position="160"/>
        <end position="162"/>
    </location>
    <ligand>
        <name>UDP-alpha-D-glucose</name>
        <dbReference type="ChEBI" id="CHEBI:58885"/>
        <note>ligand shared between dimeric partners</note>
    </ligand>
</feature>
<feature type="binding site" evidence="2">
    <location>
        <position position="165"/>
    </location>
    <ligand>
        <name>Zn(2+)</name>
        <dbReference type="ChEBI" id="CHEBI:29105"/>
    </ligand>
</feature>
<feature type="binding site" description="in other chain" evidence="1">
    <location>
        <position position="169"/>
    </location>
    <ligand>
        <name>UDP-alpha-D-glucose</name>
        <dbReference type="ChEBI" id="CHEBI:58885"/>
        <note>ligand shared between dimeric partners</note>
    </ligand>
</feature>
<feature type="binding site" evidence="1">
    <location>
        <position position="183"/>
    </location>
    <ligand>
        <name>Fe cation</name>
        <dbReference type="ChEBI" id="CHEBI:24875"/>
    </ligand>
</feature>
<feature type="binding site" evidence="1">
    <location>
        <position position="282"/>
    </location>
    <ligand>
        <name>Fe cation</name>
        <dbReference type="ChEBI" id="CHEBI:24875"/>
    </ligand>
</feature>
<feature type="binding site" evidence="1">
    <location>
        <position position="297"/>
    </location>
    <ligand>
        <name>Fe cation</name>
        <dbReference type="ChEBI" id="CHEBI:24875"/>
    </ligand>
</feature>
<feature type="binding site" evidence="1">
    <location>
        <position position="299"/>
    </location>
    <ligand>
        <name>Fe cation</name>
        <dbReference type="ChEBI" id="CHEBI:24875"/>
    </ligand>
</feature>
<feature type="binding site" evidence="1">
    <location>
        <begin position="312"/>
        <end position="313"/>
    </location>
    <ligand>
        <name>UDP-alpha-D-glucose</name>
        <dbReference type="ChEBI" id="CHEBI:58885"/>
        <note>ligand shared between dimeric partners</note>
    </ligand>
</feature>
<feature type="binding site" evidence="1">
    <location>
        <begin position="317"/>
        <end position="318"/>
    </location>
    <ligand>
        <name>UDP-alpha-D-glucose</name>
        <dbReference type="ChEBI" id="CHEBI:58885"/>
        <note>ligand shared between dimeric partners</note>
    </ligand>
</feature>
<feature type="binding site" description="in other chain" evidence="1">
    <location>
        <position position="324"/>
    </location>
    <ligand>
        <name>UDP-alpha-D-glucose</name>
        <dbReference type="ChEBI" id="CHEBI:58885"/>
        <note>ligand shared between dimeric partners</note>
    </ligand>
</feature>
<feature type="sequence variant" description="In strain: RM 7004.">
    <original>I</original>
    <variation>V</variation>
    <location>
        <position position="221"/>
    </location>
</feature>
<feature type="sequence variant" description="In strain: RM 7004.">
    <original>I</original>
    <variation>V</variation>
    <location>
        <position position="229"/>
    </location>
</feature>
<feature type="sequence variant" description="In strain: RM 7004.">
    <original>E</original>
    <variation>D</variation>
    <location>
        <position position="334"/>
    </location>
</feature>
<name>GAL7_HAEIN</name>
<reference key="1">
    <citation type="journal article" date="1992" name="Mol. Microbiol.">
        <title>The gal locus from Haemophilus influenzae: cloning, sequencing and the use of gal mutants to study lipopolysaccharide.</title>
        <authorList>
            <person name="Maskell D.J."/>
            <person name="Szabo M.J."/>
            <person name="Deadman M.E."/>
            <person name="Moxon E.R."/>
        </authorList>
    </citation>
    <scope>NUCLEOTIDE SEQUENCE [GENOMIC DNA]</scope>
    <source>
        <strain>RM 7004 / Serotype B</strain>
    </source>
</reference>
<reference key="2">
    <citation type="journal article" date="1995" name="Science">
        <title>Whole-genome random sequencing and assembly of Haemophilus influenzae Rd.</title>
        <authorList>
            <person name="Fleischmann R.D."/>
            <person name="Adams M.D."/>
            <person name="White O."/>
            <person name="Clayton R.A."/>
            <person name="Kirkness E.F."/>
            <person name="Kerlavage A.R."/>
            <person name="Bult C.J."/>
            <person name="Tomb J.-F."/>
            <person name="Dougherty B.A."/>
            <person name="Merrick J.M."/>
            <person name="McKenney K."/>
            <person name="Sutton G.G."/>
            <person name="FitzHugh W."/>
            <person name="Fields C.A."/>
            <person name="Gocayne J.D."/>
            <person name="Scott J.D."/>
            <person name="Shirley R."/>
            <person name="Liu L.-I."/>
            <person name="Glodek A."/>
            <person name="Kelley J.M."/>
            <person name="Weidman J.F."/>
            <person name="Phillips C.A."/>
            <person name="Spriggs T."/>
            <person name="Hedblom E."/>
            <person name="Cotton M.D."/>
            <person name="Utterback T.R."/>
            <person name="Hanna M.C."/>
            <person name="Nguyen D.T."/>
            <person name="Saudek D.M."/>
            <person name="Brandon R.C."/>
            <person name="Fine L.D."/>
            <person name="Fritchman J.L."/>
            <person name="Fuhrmann J.L."/>
            <person name="Geoghagen N.S.M."/>
            <person name="Gnehm C.L."/>
            <person name="McDonald L.A."/>
            <person name="Small K.V."/>
            <person name="Fraser C.M."/>
            <person name="Smith H.O."/>
            <person name="Venter J.C."/>
        </authorList>
    </citation>
    <scope>NUCLEOTIDE SEQUENCE [LARGE SCALE GENOMIC DNA]</scope>
    <source>
        <strain>ATCC 51907 / DSM 11121 / KW20 / Rd</strain>
    </source>
</reference>
<protein>
    <recommendedName>
        <fullName>Galactose-1-phosphate uridylyltransferase</fullName>
        <shortName>Gal-1-P uridylyltransferase</shortName>
        <ecNumber evidence="1">2.7.7.12</ecNumber>
    </recommendedName>
    <alternativeName>
        <fullName>UDP-glucose--hexose-1-phosphate uridylyltransferase</fullName>
    </alternativeName>
</protein>